<gene>
    <name evidence="1" type="primary">nqrD</name>
    <name type="ordered locus">PA2996</name>
</gene>
<protein>
    <recommendedName>
        <fullName evidence="1">Na(+)-translocating NADH-quinone reductase subunit D</fullName>
        <shortName evidence="1">Na(+)-NQR subunit D</shortName>
        <shortName evidence="1">Na(+)-translocating NQR subunit D</shortName>
        <ecNumber evidence="1">7.2.1.1</ecNumber>
    </recommendedName>
    <alternativeName>
        <fullName evidence="1">NQR complex subunit D</fullName>
    </alternativeName>
    <alternativeName>
        <fullName evidence="1">NQR-1 subunit D</fullName>
    </alternativeName>
</protein>
<reference key="1">
    <citation type="journal article" date="2000" name="Nature">
        <title>Complete genome sequence of Pseudomonas aeruginosa PAO1, an opportunistic pathogen.</title>
        <authorList>
            <person name="Stover C.K."/>
            <person name="Pham X.-Q.T."/>
            <person name="Erwin A.L."/>
            <person name="Mizoguchi S.D."/>
            <person name="Warrener P."/>
            <person name="Hickey M.J."/>
            <person name="Brinkman F.S.L."/>
            <person name="Hufnagle W.O."/>
            <person name="Kowalik D.J."/>
            <person name="Lagrou M."/>
            <person name="Garber R.L."/>
            <person name="Goltry L."/>
            <person name="Tolentino E."/>
            <person name="Westbrock-Wadman S."/>
            <person name="Yuan Y."/>
            <person name="Brody L.L."/>
            <person name="Coulter S.N."/>
            <person name="Folger K.R."/>
            <person name="Kas A."/>
            <person name="Larbig K."/>
            <person name="Lim R.M."/>
            <person name="Smith K.A."/>
            <person name="Spencer D.H."/>
            <person name="Wong G.K.-S."/>
            <person name="Wu Z."/>
            <person name="Paulsen I.T."/>
            <person name="Reizer J."/>
            <person name="Saier M.H. Jr."/>
            <person name="Hancock R.E.W."/>
            <person name="Lory S."/>
            <person name="Olson M.V."/>
        </authorList>
    </citation>
    <scope>NUCLEOTIDE SEQUENCE [LARGE SCALE GENOMIC DNA]</scope>
    <source>
        <strain>ATCC 15692 / DSM 22644 / CIP 104116 / JCM 14847 / LMG 12228 / 1C / PRS 101 / PAO1</strain>
    </source>
</reference>
<proteinExistence type="inferred from homology"/>
<organism>
    <name type="scientific">Pseudomonas aeruginosa (strain ATCC 15692 / DSM 22644 / CIP 104116 / JCM 14847 / LMG 12228 / 1C / PRS 101 / PAO1)</name>
    <dbReference type="NCBI Taxonomy" id="208964"/>
    <lineage>
        <taxon>Bacteria</taxon>
        <taxon>Pseudomonadati</taxon>
        <taxon>Pseudomonadota</taxon>
        <taxon>Gammaproteobacteria</taxon>
        <taxon>Pseudomonadales</taxon>
        <taxon>Pseudomonadaceae</taxon>
        <taxon>Pseudomonas</taxon>
    </lineage>
</organism>
<name>NQRD_PSEAE</name>
<evidence type="ECO:0000255" key="1">
    <source>
        <dbReference type="HAMAP-Rule" id="MF_00428"/>
    </source>
</evidence>
<feature type="chain" id="PRO_0000214238" description="Na(+)-translocating NADH-quinone reductase subunit D">
    <location>
        <begin position="1"/>
        <end position="224"/>
    </location>
</feature>
<feature type="transmembrane region" description="Helical" evidence="1">
    <location>
        <begin position="43"/>
        <end position="63"/>
    </location>
</feature>
<feature type="transmembrane region" description="Helical" evidence="1">
    <location>
        <begin position="67"/>
        <end position="87"/>
    </location>
</feature>
<feature type="transmembrane region" description="Helical" evidence="1">
    <location>
        <begin position="104"/>
        <end position="124"/>
    </location>
</feature>
<feature type="transmembrane region" description="Helical" evidence="1">
    <location>
        <begin position="132"/>
        <end position="152"/>
    </location>
</feature>
<feature type="transmembrane region" description="Helical" evidence="1">
    <location>
        <begin position="179"/>
        <end position="199"/>
    </location>
</feature>
<keyword id="KW-0997">Cell inner membrane</keyword>
<keyword id="KW-1003">Cell membrane</keyword>
<keyword id="KW-0406">Ion transport</keyword>
<keyword id="KW-0472">Membrane</keyword>
<keyword id="KW-0520">NAD</keyword>
<keyword id="KW-1185">Reference proteome</keyword>
<keyword id="KW-0915">Sodium</keyword>
<keyword id="KW-0739">Sodium transport</keyword>
<keyword id="KW-1278">Translocase</keyword>
<keyword id="KW-0812">Transmembrane</keyword>
<keyword id="KW-1133">Transmembrane helix</keyword>
<keyword id="KW-0813">Transport</keyword>
<keyword id="KW-0830">Ubiquinone</keyword>
<comment type="function">
    <text evidence="1">NQR complex catalyzes the reduction of ubiquinone-1 to ubiquinol by two successive reactions, coupled with the transport of Na(+) ions from the cytoplasm to the periplasm. NqrA to NqrE are probably involved in the second step, the conversion of ubisemiquinone to ubiquinol.</text>
</comment>
<comment type="catalytic activity">
    <reaction evidence="1">
        <text>a ubiquinone + n Na(+)(in) + NADH + H(+) = a ubiquinol + n Na(+)(out) + NAD(+)</text>
        <dbReference type="Rhea" id="RHEA:47748"/>
        <dbReference type="Rhea" id="RHEA-COMP:9565"/>
        <dbReference type="Rhea" id="RHEA-COMP:9566"/>
        <dbReference type="ChEBI" id="CHEBI:15378"/>
        <dbReference type="ChEBI" id="CHEBI:16389"/>
        <dbReference type="ChEBI" id="CHEBI:17976"/>
        <dbReference type="ChEBI" id="CHEBI:29101"/>
        <dbReference type="ChEBI" id="CHEBI:57540"/>
        <dbReference type="ChEBI" id="CHEBI:57945"/>
        <dbReference type="EC" id="7.2.1.1"/>
    </reaction>
</comment>
<comment type="subunit">
    <text evidence="1">Composed of six subunits; NqrA, NqrB, NqrC, NqrD, NqrE and NqrF.</text>
</comment>
<comment type="subcellular location">
    <subcellularLocation>
        <location evidence="1">Cell inner membrane</location>
        <topology evidence="1">Multi-pass membrane protein</topology>
    </subcellularLocation>
</comment>
<comment type="similarity">
    <text evidence="1">Belongs to the NqrDE/RnfAE family.</text>
</comment>
<accession>Q9HZK9</accession>
<sequence>MMAAQPTIREVLFNPVFQNNPIGLQILGICSALAVTSNLKTATVMAIALTLVTGFSNLFISMIRRQIPSSIRMIVQMVIIASLVIVVDQVLKAYAYSLSKQLSVFVGLIITNCIVMGRAEAFAMANPPLVSFFDGIGNGLGYSAMLLVLGFVRELFGAGKLYGISVLPTVNDGGWYQPNGLLLLPPSAFFLIGLIIWALRTWKKDQVEAPTYKMAPQVSSKEAY</sequence>
<dbReference type="EC" id="7.2.1.1" evidence="1"/>
<dbReference type="EMBL" id="AE004091">
    <property type="protein sequence ID" value="AAG06384.1"/>
    <property type="molecule type" value="Genomic_DNA"/>
</dbReference>
<dbReference type="PIR" id="E83272">
    <property type="entry name" value="E83272"/>
</dbReference>
<dbReference type="RefSeq" id="NP_251686.1">
    <property type="nucleotide sequence ID" value="NC_002516.2"/>
</dbReference>
<dbReference type="RefSeq" id="WP_003119802.1">
    <property type="nucleotide sequence ID" value="NZ_QZGE01000009.1"/>
</dbReference>
<dbReference type="SMR" id="Q9HZK9"/>
<dbReference type="STRING" id="208964.PA2996"/>
<dbReference type="PaxDb" id="208964-PA2996"/>
<dbReference type="GeneID" id="880457"/>
<dbReference type="KEGG" id="pae:PA2996"/>
<dbReference type="PATRIC" id="fig|208964.12.peg.3144"/>
<dbReference type="PseudoCAP" id="PA2996"/>
<dbReference type="HOGENOM" id="CLU_046659_1_1_6"/>
<dbReference type="InParanoid" id="Q9HZK9"/>
<dbReference type="OrthoDB" id="9782945at2"/>
<dbReference type="PhylomeDB" id="Q9HZK9"/>
<dbReference type="BioCyc" id="PAER208964:G1FZ6-3048-MONOMER"/>
<dbReference type="PHI-base" id="PHI:8942"/>
<dbReference type="Proteomes" id="UP000002438">
    <property type="component" value="Chromosome"/>
</dbReference>
<dbReference type="GO" id="GO:0005886">
    <property type="term" value="C:plasma membrane"/>
    <property type="evidence" value="ECO:0000318"/>
    <property type="project" value="GO_Central"/>
</dbReference>
<dbReference type="GO" id="GO:0016655">
    <property type="term" value="F:oxidoreductase activity, acting on NAD(P)H, quinone or similar compound as acceptor"/>
    <property type="evidence" value="ECO:0007669"/>
    <property type="project" value="UniProtKB-UniRule"/>
</dbReference>
<dbReference type="GO" id="GO:0006814">
    <property type="term" value="P:sodium ion transport"/>
    <property type="evidence" value="ECO:0007669"/>
    <property type="project" value="UniProtKB-UniRule"/>
</dbReference>
<dbReference type="HAMAP" id="MF_00428">
    <property type="entry name" value="NqrD"/>
    <property type="match status" value="1"/>
</dbReference>
<dbReference type="InterPro" id="IPR011292">
    <property type="entry name" value="NqrD"/>
</dbReference>
<dbReference type="InterPro" id="IPR003667">
    <property type="entry name" value="NqrDE/RnfAE"/>
</dbReference>
<dbReference type="NCBIfam" id="TIGR01939">
    <property type="entry name" value="nqrD"/>
    <property type="match status" value="1"/>
</dbReference>
<dbReference type="NCBIfam" id="NF006777">
    <property type="entry name" value="PRK09292.1"/>
    <property type="match status" value="1"/>
</dbReference>
<dbReference type="NCBIfam" id="NF009070">
    <property type="entry name" value="PRK12405.1"/>
    <property type="match status" value="1"/>
</dbReference>
<dbReference type="PANTHER" id="PTHR30586">
    <property type="entry name" value="ELECTRON TRANSPORT COMPLEX PROTEIN RNFE"/>
    <property type="match status" value="1"/>
</dbReference>
<dbReference type="PANTHER" id="PTHR30586:SF1">
    <property type="entry name" value="NA(+)-TRANSLOCATING NADH-QUINONE REDUCTASE SUBUNIT D"/>
    <property type="match status" value="1"/>
</dbReference>
<dbReference type="Pfam" id="PF02508">
    <property type="entry name" value="Rnf-Nqr"/>
    <property type="match status" value="1"/>
</dbReference>
<dbReference type="PIRSF" id="PIRSF006102">
    <property type="entry name" value="NQR_DE"/>
    <property type="match status" value="1"/>
</dbReference>